<organism>
    <name type="scientific">Geotalea daltonii (strain DSM 22248 / JCM 15807 / FRC-32)</name>
    <name type="common">Geobacter daltonii</name>
    <dbReference type="NCBI Taxonomy" id="316067"/>
    <lineage>
        <taxon>Bacteria</taxon>
        <taxon>Pseudomonadati</taxon>
        <taxon>Thermodesulfobacteriota</taxon>
        <taxon>Desulfuromonadia</taxon>
        <taxon>Geobacterales</taxon>
        <taxon>Geobacteraceae</taxon>
        <taxon>Geotalea</taxon>
    </lineage>
</organism>
<comment type="function">
    <text evidence="1">DNA ligase that catalyzes the formation of phosphodiester linkages between 5'-phosphoryl and 3'-hydroxyl groups in double-stranded DNA using NAD as a coenzyme and as the energy source for the reaction. It is essential for DNA replication and repair of damaged DNA.</text>
</comment>
<comment type="catalytic activity">
    <reaction evidence="1">
        <text>NAD(+) + (deoxyribonucleotide)n-3'-hydroxyl + 5'-phospho-(deoxyribonucleotide)m = (deoxyribonucleotide)n+m + AMP + beta-nicotinamide D-nucleotide.</text>
        <dbReference type="EC" id="6.5.1.2"/>
    </reaction>
</comment>
<comment type="cofactor">
    <cofactor evidence="1">
        <name>Mg(2+)</name>
        <dbReference type="ChEBI" id="CHEBI:18420"/>
    </cofactor>
    <cofactor evidence="1">
        <name>Mn(2+)</name>
        <dbReference type="ChEBI" id="CHEBI:29035"/>
    </cofactor>
</comment>
<comment type="similarity">
    <text evidence="1">Belongs to the NAD-dependent DNA ligase family. LigA subfamily.</text>
</comment>
<keyword id="KW-0227">DNA damage</keyword>
<keyword id="KW-0234">DNA repair</keyword>
<keyword id="KW-0235">DNA replication</keyword>
<keyword id="KW-0436">Ligase</keyword>
<keyword id="KW-0460">Magnesium</keyword>
<keyword id="KW-0464">Manganese</keyword>
<keyword id="KW-0479">Metal-binding</keyword>
<keyword id="KW-0520">NAD</keyword>
<keyword id="KW-1185">Reference proteome</keyword>
<keyword id="KW-0862">Zinc</keyword>
<evidence type="ECO:0000255" key="1">
    <source>
        <dbReference type="HAMAP-Rule" id="MF_01588"/>
    </source>
</evidence>
<proteinExistence type="inferred from homology"/>
<dbReference type="EC" id="6.5.1.2" evidence="1"/>
<dbReference type="EMBL" id="CP001390">
    <property type="protein sequence ID" value="ACM20327.1"/>
    <property type="molecule type" value="Genomic_DNA"/>
</dbReference>
<dbReference type="RefSeq" id="WP_012647056.1">
    <property type="nucleotide sequence ID" value="NC_011979.1"/>
</dbReference>
<dbReference type="SMR" id="B9M861"/>
<dbReference type="STRING" id="316067.Geob_1970"/>
<dbReference type="KEGG" id="geo:Geob_1970"/>
<dbReference type="eggNOG" id="COG0272">
    <property type="taxonomic scope" value="Bacteria"/>
</dbReference>
<dbReference type="HOGENOM" id="CLU_007764_2_1_7"/>
<dbReference type="OrthoDB" id="9759736at2"/>
<dbReference type="Proteomes" id="UP000007721">
    <property type="component" value="Chromosome"/>
</dbReference>
<dbReference type="GO" id="GO:0005829">
    <property type="term" value="C:cytosol"/>
    <property type="evidence" value="ECO:0007669"/>
    <property type="project" value="TreeGrafter"/>
</dbReference>
<dbReference type="GO" id="GO:0003677">
    <property type="term" value="F:DNA binding"/>
    <property type="evidence" value="ECO:0007669"/>
    <property type="project" value="InterPro"/>
</dbReference>
<dbReference type="GO" id="GO:0003911">
    <property type="term" value="F:DNA ligase (NAD+) activity"/>
    <property type="evidence" value="ECO:0007669"/>
    <property type="project" value="UniProtKB-UniRule"/>
</dbReference>
<dbReference type="GO" id="GO:0046872">
    <property type="term" value="F:metal ion binding"/>
    <property type="evidence" value="ECO:0007669"/>
    <property type="project" value="UniProtKB-KW"/>
</dbReference>
<dbReference type="GO" id="GO:0006281">
    <property type="term" value="P:DNA repair"/>
    <property type="evidence" value="ECO:0007669"/>
    <property type="project" value="UniProtKB-KW"/>
</dbReference>
<dbReference type="GO" id="GO:0006260">
    <property type="term" value="P:DNA replication"/>
    <property type="evidence" value="ECO:0007669"/>
    <property type="project" value="UniProtKB-KW"/>
</dbReference>
<dbReference type="CDD" id="cd17748">
    <property type="entry name" value="BRCT_DNA_ligase_like"/>
    <property type="match status" value="1"/>
</dbReference>
<dbReference type="CDD" id="cd00114">
    <property type="entry name" value="LIGANc"/>
    <property type="match status" value="1"/>
</dbReference>
<dbReference type="FunFam" id="1.10.150.20:FF:000006">
    <property type="entry name" value="DNA ligase"/>
    <property type="match status" value="1"/>
</dbReference>
<dbReference type="FunFam" id="1.10.150.20:FF:000007">
    <property type="entry name" value="DNA ligase"/>
    <property type="match status" value="1"/>
</dbReference>
<dbReference type="FunFam" id="1.10.287.610:FF:000002">
    <property type="entry name" value="DNA ligase"/>
    <property type="match status" value="1"/>
</dbReference>
<dbReference type="FunFam" id="2.40.50.140:FF:000012">
    <property type="entry name" value="DNA ligase"/>
    <property type="match status" value="1"/>
</dbReference>
<dbReference type="FunFam" id="3.30.470.30:FF:000001">
    <property type="entry name" value="DNA ligase"/>
    <property type="match status" value="1"/>
</dbReference>
<dbReference type="FunFam" id="3.40.50.10190:FF:000054">
    <property type="entry name" value="DNA ligase"/>
    <property type="match status" value="1"/>
</dbReference>
<dbReference type="Gene3D" id="6.20.10.30">
    <property type="match status" value="1"/>
</dbReference>
<dbReference type="Gene3D" id="1.10.150.20">
    <property type="entry name" value="5' to 3' exonuclease, C-terminal subdomain"/>
    <property type="match status" value="2"/>
</dbReference>
<dbReference type="Gene3D" id="3.40.50.10190">
    <property type="entry name" value="BRCT domain"/>
    <property type="match status" value="1"/>
</dbReference>
<dbReference type="Gene3D" id="3.30.470.30">
    <property type="entry name" value="DNA ligase/mRNA capping enzyme"/>
    <property type="match status" value="1"/>
</dbReference>
<dbReference type="Gene3D" id="1.10.287.610">
    <property type="entry name" value="Helix hairpin bin"/>
    <property type="match status" value="1"/>
</dbReference>
<dbReference type="Gene3D" id="2.40.50.140">
    <property type="entry name" value="Nucleic acid-binding proteins"/>
    <property type="match status" value="1"/>
</dbReference>
<dbReference type="HAMAP" id="MF_01588">
    <property type="entry name" value="DNA_ligase_A"/>
    <property type="match status" value="1"/>
</dbReference>
<dbReference type="InterPro" id="IPR001357">
    <property type="entry name" value="BRCT_dom"/>
</dbReference>
<dbReference type="InterPro" id="IPR036420">
    <property type="entry name" value="BRCT_dom_sf"/>
</dbReference>
<dbReference type="InterPro" id="IPR041663">
    <property type="entry name" value="DisA/LigA_HHH"/>
</dbReference>
<dbReference type="InterPro" id="IPR001679">
    <property type="entry name" value="DNA_ligase"/>
</dbReference>
<dbReference type="InterPro" id="IPR018239">
    <property type="entry name" value="DNA_ligase_AS"/>
</dbReference>
<dbReference type="InterPro" id="IPR033136">
    <property type="entry name" value="DNA_ligase_CS"/>
</dbReference>
<dbReference type="InterPro" id="IPR013839">
    <property type="entry name" value="DNAligase_adenylation"/>
</dbReference>
<dbReference type="InterPro" id="IPR013840">
    <property type="entry name" value="DNAligase_N"/>
</dbReference>
<dbReference type="InterPro" id="IPR003583">
    <property type="entry name" value="Hlx-hairpin-Hlx_DNA-bd_motif"/>
</dbReference>
<dbReference type="InterPro" id="IPR012340">
    <property type="entry name" value="NA-bd_OB-fold"/>
</dbReference>
<dbReference type="InterPro" id="IPR004150">
    <property type="entry name" value="NAD_DNA_ligase_OB"/>
</dbReference>
<dbReference type="InterPro" id="IPR010994">
    <property type="entry name" value="RuvA_2-like"/>
</dbReference>
<dbReference type="InterPro" id="IPR004149">
    <property type="entry name" value="Znf_DNAligase_C4"/>
</dbReference>
<dbReference type="NCBIfam" id="TIGR00575">
    <property type="entry name" value="dnlj"/>
    <property type="match status" value="1"/>
</dbReference>
<dbReference type="NCBIfam" id="NF005932">
    <property type="entry name" value="PRK07956.1"/>
    <property type="match status" value="1"/>
</dbReference>
<dbReference type="PANTHER" id="PTHR23389">
    <property type="entry name" value="CHROMOSOME TRANSMISSION FIDELITY FACTOR 18"/>
    <property type="match status" value="1"/>
</dbReference>
<dbReference type="PANTHER" id="PTHR23389:SF9">
    <property type="entry name" value="DNA LIGASE"/>
    <property type="match status" value="1"/>
</dbReference>
<dbReference type="Pfam" id="PF00533">
    <property type="entry name" value="BRCT"/>
    <property type="match status" value="1"/>
</dbReference>
<dbReference type="Pfam" id="PF01653">
    <property type="entry name" value="DNA_ligase_aden"/>
    <property type="match status" value="1"/>
</dbReference>
<dbReference type="Pfam" id="PF03120">
    <property type="entry name" value="DNA_ligase_OB"/>
    <property type="match status" value="1"/>
</dbReference>
<dbReference type="Pfam" id="PF03119">
    <property type="entry name" value="DNA_ligase_ZBD"/>
    <property type="match status" value="1"/>
</dbReference>
<dbReference type="Pfam" id="PF12826">
    <property type="entry name" value="HHH_2"/>
    <property type="match status" value="1"/>
</dbReference>
<dbReference type="Pfam" id="PF14520">
    <property type="entry name" value="HHH_5"/>
    <property type="match status" value="1"/>
</dbReference>
<dbReference type="Pfam" id="PF22745">
    <property type="entry name" value="Nlig-Ia"/>
    <property type="match status" value="1"/>
</dbReference>
<dbReference type="PIRSF" id="PIRSF001604">
    <property type="entry name" value="LigA"/>
    <property type="match status" value="1"/>
</dbReference>
<dbReference type="SMART" id="SM00292">
    <property type="entry name" value="BRCT"/>
    <property type="match status" value="1"/>
</dbReference>
<dbReference type="SMART" id="SM00278">
    <property type="entry name" value="HhH1"/>
    <property type="match status" value="4"/>
</dbReference>
<dbReference type="SMART" id="SM00532">
    <property type="entry name" value="LIGANc"/>
    <property type="match status" value="1"/>
</dbReference>
<dbReference type="SUPFAM" id="SSF52113">
    <property type="entry name" value="BRCT domain"/>
    <property type="match status" value="1"/>
</dbReference>
<dbReference type="SUPFAM" id="SSF56091">
    <property type="entry name" value="DNA ligase/mRNA capping enzyme, catalytic domain"/>
    <property type="match status" value="1"/>
</dbReference>
<dbReference type="SUPFAM" id="SSF50249">
    <property type="entry name" value="Nucleic acid-binding proteins"/>
    <property type="match status" value="1"/>
</dbReference>
<dbReference type="SUPFAM" id="SSF47781">
    <property type="entry name" value="RuvA domain 2-like"/>
    <property type="match status" value="1"/>
</dbReference>
<dbReference type="PROSITE" id="PS50172">
    <property type="entry name" value="BRCT"/>
    <property type="match status" value="1"/>
</dbReference>
<dbReference type="PROSITE" id="PS01055">
    <property type="entry name" value="DNA_LIGASE_N1"/>
    <property type="match status" value="1"/>
</dbReference>
<dbReference type="PROSITE" id="PS01056">
    <property type="entry name" value="DNA_LIGASE_N2"/>
    <property type="match status" value="1"/>
</dbReference>
<sequence length="669" mass="74844">MDRTAAQLRIQELHREINRHNYLYYVEDRPEITDAEYDLLLRELQQLEKEFPDLVTADSPTQRVGAAPLDKFNQVSHRLPMLSLENAFNEGEMRDFDERIKRYLGLPMAKEIEYVCEPKMDGLAVELIYEEGSLTFGSTRGDGYVGEDVTQNLKTVKSIPLRLHCSPPPSLVEVRGEVYLGLAPFQKLNMDREEAGLPPFANPRNAAAGSLRQLDPRITARRPLSIFCYAPGLVEGYEFTSQSQMLATLPQWGLPVNPLIKKVAGIDAVLAYYREIGETRESLPYEIDGVVIKVDSFDLQRDLGEKTRSPRWAIAWKFPPRQAVTVVEDIVPQVGRTGVITPVAHLKPVEVSGVMVSRATLHNWEEMEKKDIRKGDTVVVERAGDVIPAVVKVMTEKRLEGAELLAVPAACPECGSEIVKIPGEVAIRCLGLTCPAQIRETIIHFASRHAMDIEGMGDKYVEQLLRLELVKTVADLYYLTKKDFMRFERMGDKLAENLLNAIEASKHRELSRFIFALGIRHVGEHTAKLLASAFGSVEHLEKATEEELLSIREVGPQVAQSVRTFFRNPANREVIERMFAAGVRPAVEEKRLGGRFTGKTFVFTGALTRFTRDDAKNMVENEGGHAAGSVSKKTDYVVAGAEAGSKLDKARQLGVNVLTEDEFLKMLEG</sequence>
<feature type="chain" id="PRO_0000380390" description="DNA ligase">
    <location>
        <begin position="1"/>
        <end position="669"/>
    </location>
</feature>
<feature type="domain" description="BRCT" evidence="1">
    <location>
        <begin position="591"/>
        <end position="669"/>
    </location>
</feature>
<feature type="active site" description="N6-AMP-lysine intermediate" evidence="1">
    <location>
        <position position="119"/>
    </location>
</feature>
<feature type="binding site" evidence="1">
    <location>
        <begin position="34"/>
        <end position="38"/>
    </location>
    <ligand>
        <name>NAD(+)</name>
        <dbReference type="ChEBI" id="CHEBI:57540"/>
    </ligand>
</feature>
<feature type="binding site" evidence="1">
    <location>
        <begin position="83"/>
        <end position="84"/>
    </location>
    <ligand>
        <name>NAD(+)</name>
        <dbReference type="ChEBI" id="CHEBI:57540"/>
    </ligand>
</feature>
<feature type="binding site" evidence="1">
    <location>
        <position position="117"/>
    </location>
    <ligand>
        <name>NAD(+)</name>
        <dbReference type="ChEBI" id="CHEBI:57540"/>
    </ligand>
</feature>
<feature type="binding site" evidence="1">
    <location>
        <position position="140"/>
    </location>
    <ligand>
        <name>NAD(+)</name>
        <dbReference type="ChEBI" id="CHEBI:57540"/>
    </ligand>
</feature>
<feature type="binding site" evidence="1">
    <location>
        <position position="177"/>
    </location>
    <ligand>
        <name>NAD(+)</name>
        <dbReference type="ChEBI" id="CHEBI:57540"/>
    </ligand>
</feature>
<feature type="binding site" evidence="1">
    <location>
        <position position="293"/>
    </location>
    <ligand>
        <name>NAD(+)</name>
        <dbReference type="ChEBI" id="CHEBI:57540"/>
    </ligand>
</feature>
<feature type="binding site" evidence="1">
    <location>
        <position position="317"/>
    </location>
    <ligand>
        <name>NAD(+)</name>
        <dbReference type="ChEBI" id="CHEBI:57540"/>
    </ligand>
</feature>
<feature type="binding site" evidence="1">
    <location>
        <position position="411"/>
    </location>
    <ligand>
        <name>Zn(2+)</name>
        <dbReference type="ChEBI" id="CHEBI:29105"/>
    </ligand>
</feature>
<feature type="binding site" evidence="1">
    <location>
        <position position="414"/>
    </location>
    <ligand>
        <name>Zn(2+)</name>
        <dbReference type="ChEBI" id="CHEBI:29105"/>
    </ligand>
</feature>
<feature type="binding site" evidence="1">
    <location>
        <position position="429"/>
    </location>
    <ligand>
        <name>Zn(2+)</name>
        <dbReference type="ChEBI" id="CHEBI:29105"/>
    </ligand>
</feature>
<feature type="binding site" evidence="1">
    <location>
        <position position="434"/>
    </location>
    <ligand>
        <name>Zn(2+)</name>
        <dbReference type="ChEBI" id="CHEBI:29105"/>
    </ligand>
</feature>
<protein>
    <recommendedName>
        <fullName evidence="1">DNA ligase</fullName>
        <ecNumber evidence="1">6.5.1.2</ecNumber>
    </recommendedName>
    <alternativeName>
        <fullName evidence="1">Polydeoxyribonucleotide synthase [NAD(+)]</fullName>
    </alternativeName>
</protein>
<reference key="1">
    <citation type="submission" date="2009-01" db="EMBL/GenBank/DDBJ databases">
        <title>Complete sequence of Geobacter sp. FRC-32.</title>
        <authorList>
            <consortium name="US DOE Joint Genome Institute"/>
            <person name="Lucas S."/>
            <person name="Copeland A."/>
            <person name="Lapidus A."/>
            <person name="Glavina del Rio T."/>
            <person name="Dalin E."/>
            <person name="Tice H."/>
            <person name="Bruce D."/>
            <person name="Goodwin L."/>
            <person name="Pitluck S."/>
            <person name="Saunders E."/>
            <person name="Brettin T."/>
            <person name="Detter J.C."/>
            <person name="Han C."/>
            <person name="Larimer F."/>
            <person name="Land M."/>
            <person name="Hauser L."/>
            <person name="Kyrpides N."/>
            <person name="Ovchinnikova G."/>
            <person name="Kostka J."/>
            <person name="Richardson P."/>
        </authorList>
    </citation>
    <scope>NUCLEOTIDE SEQUENCE [LARGE SCALE GENOMIC DNA]</scope>
    <source>
        <strain>DSM 22248 / JCM 15807 / FRC-32</strain>
    </source>
</reference>
<accession>B9M861</accession>
<gene>
    <name evidence="1" type="primary">ligA</name>
    <name type="ordered locus">Geob_1970</name>
</gene>
<name>DNLJ_GEODF</name>